<keyword id="KW-0030">Aminoacyl-tRNA synthetase</keyword>
<keyword id="KW-0067">ATP-binding</keyword>
<keyword id="KW-0963">Cytoplasm</keyword>
<keyword id="KW-0436">Ligase</keyword>
<keyword id="KW-0479">Metal-binding</keyword>
<keyword id="KW-0547">Nucleotide-binding</keyword>
<keyword id="KW-0648">Protein biosynthesis</keyword>
<keyword id="KW-0862">Zinc</keyword>
<gene>
    <name evidence="1" type="primary">cysS</name>
    <name type="ordered locus">BARBAKC583_0481</name>
</gene>
<comment type="catalytic activity">
    <reaction evidence="1">
        <text>tRNA(Cys) + L-cysteine + ATP = L-cysteinyl-tRNA(Cys) + AMP + diphosphate</text>
        <dbReference type="Rhea" id="RHEA:17773"/>
        <dbReference type="Rhea" id="RHEA-COMP:9661"/>
        <dbReference type="Rhea" id="RHEA-COMP:9679"/>
        <dbReference type="ChEBI" id="CHEBI:30616"/>
        <dbReference type="ChEBI" id="CHEBI:33019"/>
        <dbReference type="ChEBI" id="CHEBI:35235"/>
        <dbReference type="ChEBI" id="CHEBI:78442"/>
        <dbReference type="ChEBI" id="CHEBI:78517"/>
        <dbReference type="ChEBI" id="CHEBI:456215"/>
        <dbReference type="EC" id="6.1.1.16"/>
    </reaction>
</comment>
<comment type="cofactor">
    <cofactor evidence="1">
        <name>Zn(2+)</name>
        <dbReference type="ChEBI" id="CHEBI:29105"/>
    </cofactor>
    <text evidence="1">Binds 1 zinc ion per subunit.</text>
</comment>
<comment type="subunit">
    <text evidence="1">Monomer.</text>
</comment>
<comment type="subcellular location">
    <subcellularLocation>
        <location evidence="1">Cytoplasm</location>
    </subcellularLocation>
</comment>
<comment type="similarity">
    <text evidence="1">Belongs to the class-I aminoacyl-tRNA synthetase family.</text>
</comment>
<reference key="1">
    <citation type="submission" date="2006-12" db="EMBL/GenBank/DDBJ databases">
        <authorList>
            <person name="Hendrix L."/>
            <person name="Mohamoud Y."/>
            <person name="Radune D."/>
            <person name="Shvartsbeyn A."/>
            <person name="Daugherty S."/>
            <person name="Dodson R."/>
            <person name="Durkin A.S."/>
            <person name="Harkins D."/>
            <person name="Huot H."/>
            <person name="Kothari S.P."/>
            <person name="Madupu R."/>
            <person name="Li J."/>
            <person name="Nelson W.C."/>
            <person name="Shrivastava S."/>
            <person name="Giglio M.G."/>
            <person name="Haft D."/>
            <person name="Selengut J."/>
            <person name="Fraser-Ligget C."/>
            <person name="Seshadri R."/>
        </authorList>
    </citation>
    <scope>NUCLEOTIDE SEQUENCE [LARGE SCALE GENOMIC DNA]</scope>
    <source>
        <strain>ATCC 35685 / KC583 / Herrer 020/F12,63</strain>
    </source>
</reference>
<feature type="chain" id="PRO_0000332792" description="Cysteine--tRNA ligase">
    <location>
        <begin position="1"/>
        <end position="500"/>
    </location>
</feature>
<feature type="short sequence motif" description="'HIGH' region">
    <location>
        <begin position="32"/>
        <end position="42"/>
    </location>
</feature>
<feature type="short sequence motif" description="'KMSKS' region">
    <location>
        <begin position="296"/>
        <end position="300"/>
    </location>
</feature>
<feature type="binding site" evidence="1">
    <location>
        <position position="30"/>
    </location>
    <ligand>
        <name>Zn(2+)</name>
        <dbReference type="ChEBI" id="CHEBI:29105"/>
    </ligand>
</feature>
<feature type="binding site" evidence="1">
    <location>
        <position position="224"/>
    </location>
    <ligand>
        <name>Zn(2+)</name>
        <dbReference type="ChEBI" id="CHEBI:29105"/>
    </ligand>
</feature>
<feature type="binding site" evidence="1">
    <location>
        <position position="263"/>
    </location>
    <ligand>
        <name>Zn(2+)</name>
        <dbReference type="ChEBI" id="CHEBI:29105"/>
    </ligand>
</feature>
<feature type="binding site" evidence="1">
    <location>
        <position position="267"/>
    </location>
    <ligand>
        <name>Zn(2+)</name>
        <dbReference type="ChEBI" id="CHEBI:29105"/>
    </ligand>
</feature>
<feature type="binding site" evidence="1">
    <location>
        <position position="299"/>
    </location>
    <ligand>
        <name>ATP</name>
        <dbReference type="ChEBI" id="CHEBI:30616"/>
    </ligand>
</feature>
<protein>
    <recommendedName>
        <fullName evidence="1">Cysteine--tRNA ligase</fullName>
        <ecNumber evidence="1">6.1.1.16</ecNumber>
    </recommendedName>
    <alternativeName>
        <fullName evidence="1">Cysteinyl-tRNA synthetase</fullName>
        <shortName evidence="1">CysRS</shortName>
    </alternativeName>
</protein>
<sequence length="500" mass="57290">MGNLRFYNTLTRKKEDFIPIDSSKVRLYVCGPTVYDYAHIGNARPVIVFDILFRLLRHVYGKDHVIYARNVTDVDDKINARAIREYPKLTLNDAIHQLTERTYDQFQQDTEALGCLLPTYQPRATDHLEEMRSLIERLLEKGHAYIAENHVLFSVNSIKNNPLYGVFAKRSLNEMKAGARVDVAPYKRDDMDFVLWKPSTQQEPGWKSPAGISVLGRPGWHIECSAMSMAKLLTPYGGGLACDDLSVNVFDIHGGGIDLIFPHHENEIAQSCSVFGTERMANFWMHNGFLQVEGRKMSKSFGNFITIRSILESNFVEFSNAMTDDLKQSWAGLSARFSMLQTHYREPLNWTAQRLAQSSSELYRWYELLRCERSCLDNGGVIDASLISTLSDDLNTPNSFTLLRKFYKEENAVALVQGMDLFGLLRQEWVREIECPLFVKGIDLDSKFIDQRIAERLLFIQNKEWAAADEIRNELAKKGIALKDEKDSQTGERITTWEVK</sequence>
<name>SYC_BARBK</name>
<organism>
    <name type="scientific">Bartonella bacilliformis (strain ATCC 35685 / KC583 / Herrer 020/F12,63)</name>
    <dbReference type="NCBI Taxonomy" id="360095"/>
    <lineage>
        <taxon>Bacteria</taxon>
        <taxon>Pseudomonadati</taxon>
        <taxon>Pseudomonadota</taxon>
        <taxon>Alphaproteobacteria</taxon>
        <taxon>Hyphomicrobiales</taxon>
        <taxon>Bartonellaceae</taxon>
        <taxon>Bartonella</taxon>
    </lineage>
</organism>
<proteinExistence type="inferred from homology"/>
<accession>A1US43</accession>
<evidence type="ECO:0000255" key="1">
    <source>
        <dbReference type="HAMAP-Rule" id="MF_00041"/>
    </source>
</evidence>
<dbReference type="EC" id="6.1.1.16" evidence="1"/>
<dbReference type="EMBL" id="CP000524">
    <property type="protein sequence ID" value="ABM45202.1"/>
    <property type="molecule type" value="Genomic_DNA"/>
</dbReference>
<dbReference type="RefSeq" id="WP_005766561.1">
    <property type="nucleotide sequence ID" value="NC_008783.1"/>
</dbReference>
<dbReference type="SMR" id="A1US43"/>
<dbReference type="STRING" id="360095.BARBAKC583_0481"/>
<dbReference type="GeneID" id="4685030"/>
<dbReference type="KEGG" id="bbk:BARBAKC583_0481"/>
<dbReference type="PATRIC" id="fig|360095.6.peg.464"/>
<dbReference type="eggNOG" id="COG0215">
    <property type="taxonomic scope" value="Bacteria"/>
</dbReference>
<dbReference type="HOGENOM" id="CLU_013528_0_1_5"/>
<dbReference type="OrthoDB" id="9815130at2"/>
<dbReference type="Proteomes" id="UP000000643">
    <property type="component" value="Chromosome"/>
</dbReference>
<dbReference type="GO" id="GO:0005829">
    <property type="term" value="C:cytosol"/>
    <property type="evidence" value="ECO:0007669"/>
    <property type="project" value="TreeGrafter"/>
</dbReference>
<dbReference type="GO" id="GO:0005524">
    <property type="term" value="F:ATP binding"/>
    <property type="evidence" value="ECO:0007669"/>
    <property type="project" value="UniProtKB-UniRule"/>
</dbReference>
<dbReference type="GO" id="GO:0004817">
    <property type="term" value="F:cysteine-tRNA ligase activity"/>
    <property type="evidence" value="ECO:0007669"/>
    <property type="project" value="UniProtKB-UniRule"/>
</dbReference>
<dbReference type="GO" id="GO:0008270">
    <property type="term" value="F:zinc ion binding"/>
    <property type="evidence" value="ECO:0007669"/>
    <property type="project" value="UniProtKB-UniRule"/>
</dbReference>
<dbReference type="GO" id="GO:0006423">
    <property type="term" value="P:cysteinyl-tRNA aminoacylation"/>
    <property type="evidence" value="ECO:0007669"/>
    <property type="project" value="UniProtKB-UniRule"/>
</dbReference>
<dbReference type="CDD" id="cd00672">
    <property type="entry name" value="CysRS_core"/>
    <property type="match status" value="1"/>
</dbReference>
<dbReference type="Gene3D" id="1.20.120.1910">
    <property type="entry name" value="Cysteine-tRNA ligase, C-terminal anti-codon recognition domain"/>
    <property type="match status" value="1"/>
</dbReference>
<dbReference type="Gene3D" id="3.40.50.620">
    <property type="entry name" value="HUPs"/>
    <property type="match status" value="1"/>
</dbReference>
<dbReference type="HAMAP" id="MF_00041">
    <property type="entry name" value="Cys_tRNA_synth"/>
    <property type="match status" value="1"/>
</dbReference>
<dbReference type="InterPro" id="IPR015803">
    <property type="entry name" value="Cys-tRNA-ligase"/>
</dbReference>
<dbReference type="InterPro" id="IPR024909">
    <property type="entry name" value="Cys-tRNA/MSH_ligase"/>
</dbReference>
<dbReference type="InterPro" id="IPR056411">
    <property type="entry name" value="CysS_C"/>
</dbReference>
<dbReference type="InterPro" id="IPR014729">
    <property type="entry name" value="Rossmann-like_a/b/a_fold"/>
</dbReference>
<dbReference type="InterPro" id="IPR032678">
    <property type="entry name" value="tRNA-synt_1_cat_dom"/>
</dbReference>
<dbReference type="InterPro" id="IPR009080">
    <property type="entry name" value="tRNAsynth_Ia_anticodon-bd"/>
</dbReference>
<dbReference type="NCBIfam" id="TIGR00435">
    <property type="entry name" value="cysS"/>
    <property type="match status" value="1"/>
</dbReference>
<dbReference type="PANTHER" id="PTHR10890:SF3">
    <property type="entry name" value="CYSTEINE--TRNA LIGASE, CYTOPLASMIC"/>
    <property type="match status" value="1"/>
</dbReference>
<dbReference type="PANTHER" id="PTHR10890">
    <property type="entry name" value="CYSTEINYL-TRNA SYNTHETASE"/>
    <property type="match status" value="1"/>
</dbReference>
<dbReference type="Pfam" id="PF23493">
    <property type="entry name" value="CysS_C"/>
    <property type="match status" value="1"/>
</dbReference>
<dbReference type="Pfam" id="PF01406">
    <property type="entry name" value="tRNA-synt_1e"/>
    <property type="match status" value="1"/>
</dbReference>
<dbReference type="PRINTS" id="PR00983">
    <property type="entry name" value="TRNASYNTHCYS"/>
</dbReference>
<dbReference type="SUPFAM" id="SSF47323">
    <property type="entry name" value="Anticodon-binding domain of a subclass of class I aminoacyl-tRNA synthetases"/>
    <property type="match status" value="1"/>
</dbReference>
<dbReference type="SUPFAM" id="SSF52374">
    <property type="entry name" value="Nucleotidylyl transferase"/>
    <property type="match status" value="1"/>
</dbReference>